<name>PSB_METPS</name>
<gene>
    <name evidence="1" type="primary">psmB</name>
    <name type="ordered locus">MCP_2399</name>
</gene>
<reference key="1">
    <citation type="journal article" date="2011" name="PLoS ONE">
        <title>Genome sequence of a mesophilic hydrogenotrophic methanogen Methanocella paludicola, the first cultivated representative of the order Methanocellales.</title>
        <authorList>
            <person name="Sakai S."/>
            <person name="Takaki Y."/>
            <person name="Shimamura S."/>
            <person name="Sekine M."/>
            <person name="Tajima T."/>
            <person name="Kosugi H."/>
            <person name="Ichikawa N."/>
            <person name="Tasumi E."/>
            <person name="Hiraki A.T."/>
            <person name="Shimizu A."/>
            <person name="Kato Y."/>
            <person name="Nishiko R."/>
            <person name="Mori K."/>
            <person name="Fujita N."/>
            <person name="Imachi H."/>
            <person name="Takai K."/>
        </authorList>
    </citation>
    <scope>NUCLEOTIDE SEQUENCE [LARGE SCALE GENOMIC DNA]</scope>
    <source>
        <strain>DSM 17711 / JCM 13418 / NBRC 101707 / SANAE</strain>
    </source>
</reference>
<accession>D1Z199</accession>
<protein>
    <recommendedName>
        <fullName evidence="1">Proteasome subunit beta</fullName>
        <ecNumber evidence="1">3.4.25.1</ecNumber>
    </recommendedName>
    <alternativeName>
        <fullName evidence="1">20S proteasome beta subunit</fullName>
    </alternativeName>
    <alternativeName>
        <fullName evidence="1">Proteasome core protein PsmB</fullName>
    </alternativeName>
</protein>
<proteinExistence type="inferred from homology"/>
<keyword id="KW-0068">Autocatalytic cleavage</keyword>
<keyword id="KW-0963">Cytoplasm</keyword>
<keyword id="KW-0378">Hydrolase</keyword>
<keyword id="KW-0645">Protease</keyword>
<keyword id="KW-0647">Proteasome</keyword>
<keyword id="KW-0888">Threonine protease</keyword>
<keyword id="KW-0865">Zymogen</keyword>
<sequence>MDDKQYKGTTTVGIICNNGLVLATERRATMGNLIASRDAQKIYQLTDNIAMTIAGSVGDGQRLARMLQAESKLFELRRHGPMSINALSMLLSNLLWEYRIFYIQVLVGGVDKSGPKLFSLDPAGGRITEVKFSSTGSGSPLAYGVLEDRYKQDMSVEQGVELAAKALESAMKRDSASGNGMQFCVITPGKVEIFEREVGKQVCNS</sequence>
<feature type="propeptide" id="PRO_0000397340" description="Removed in mature form; by autocatalysis" evidence="1">
    <location>
        <begin position="1"/>
        <end position="8"/>
    </location>
</feature>
<feature type="chain" id="PRO_0000397341" description="Proteasome subunit beta">
    <location>
        <begin position="9"/>
        <end position="205"/>
    </location>
</feature>
<feature type="active site" description="Nucleophile" evidence="1">
    <location>
        <position position="9"/>
    </location>
</feature>
<dbReference type="EC" id="3.4.25.1" evidence="1"/>
<dbReference type="EMBL" id="AP011532">
    <property type="protein sequence ID" value="BAI62471.1"/>
    <property type="molecule type" value="Genomic_DNA"/>
</dbReference>
<dbReference type="RefSeq" id="WP_012901145.1">
    <property type="nucleotide sequence ID" value="NC_013665.1"/>
</dbReference>
<dbReference type="SMR" id="D1Z199"/>
<dbReference type="FunCoup" id="D1Z199">
    <property type="interactions" value="133"/>
</dbReference>
<dbReference type="STRING" id="304371.MCP_2399"/>
<dbReference type="MEROPS" id="T01.002"/>
<dbReference type="GeneID" id="8682192"/>
<dbReference type="KEGG" id="mpd:MCP_2399"/>
<dbReference type="PATRIC" id="fig|304371.9.peg.2446"/>
<dbReference type="eggNOG" id="arCOG00970">
    <property type="taxonomic scope" value="Archaea"/>
</dbReference>
<dbReference type="InParanoid" id="D1Z199"/>
<dbReference type="OrthoDB" id="6330at2157"/>
<dbReference type="Proteomes" id="UP000001882">
    <property type="component" value="Chromosome"/>
</dbReference>
<dbReference type="GO" id="GO:0005737">
    <property type="term" value="C:cytoplasm"/>
    <property type="evidence" value="ECO:0007669"/>
    <property type="project" value="UniProtKB-SubCell"/>
</dbReference>
<dbReference type="GO" id="GO:0019774">
    <property type="term" value="C:proteasome core complex, beta-subunit complex"/>
    <property type="evidence" value="ECO:0007669"/>
    <property type="project" value="UniProtKB-UniRule"/>
</dbReference>
<dbReference type="GO" id="GO:0004298">
    <property type="term" value="F:threonine-type endopeptidase activity"/>
    <property type="evidence" value="ECO:0007669"/>
    <property type="project" value="UniProtKB-UniRule"/>
</dbReference>
<dbReference type="GO" id="GO:0010498">
    <property type="term" value="P:proteasomal protein catabolic process"/>
    <property type="evidence" value="ECO:0007669"/>
    <property type="project" value="UniProtKB-UniRule"/>
</dbReference>
<dbReference type="FunFam" id="3.60.20.10:FF:000049">
    <property type="entry name" value="Proteasome subunit beta"/>
    <property type="match status" value="1"/>
</dbReference>
<dbReference type="Gene3D" id="3.60.20.10">
    <property type="entry name" value="Glutamine Phosphoribosylpyrophosphate, subunit 1, domain 1"/>
    <property type="match status" value="1"/>
</dbReference>
<dbReference type="HAMAP" id="MF_02113_A">
    <property type="entry name" value="Proteasome_B_A"/>
    <property type="match status" value="1"/>
</dbReference>
<dbReference type="InterPro" id="IPR029055">
    <property type="entry name" value="Ntn_hydrolases_N"/>
</dbReference>
<dbReference type="InterPro" id="IPR019983">
    <property type="entry name" value="Pept_T1A_Psome_bsu_arc"/>
</dbReference>
<dbReference type="InterPro" id="IPR000243">
    <property type="entry name" value="Pept_T1A_subB"/>
</dbReference>
<dbReference type="InterPro" id="IPR016050">
    <property type="entry name" value="Proteasome_bsu_CS"/>
</dbReference>
<dbReference type="InterPro" id="IPR001353">
    <property type="entry name" value="Proteasome_sua/b"/>
</dbReference>
<dbReference type="InterPro" id="IPR023333">
    <property type="entry name" value="Proteasome_suB-type"/>
</dbReference>
<dbReference type="NCBIfam" id="TIGR03634">
    <property type="entry name" value="arc_protsome_B"/>
    <property type="match status" value="1"/>
</dbReference>
<dbReference type="PANTHER" id="PTHR32194:SF0">
    <property type="entry name" value="ATP-DEPENDENT PROTEASE SUBUNIT HSLV"/>
    <property type="match status" value="1"/>
</dbReference>
<dbReference type="PANTHER" id="PTHR32194">
    <property type="entry name" value="METALLOPROTEASE TLDD"/>
    <property type="match status" value="1"/>
</dbReference>
<dbReference type="Pfam" id="PF00227">
    <property type="entry name" value="Proteasome"/>
    <property type="match status" value="1"/>
</dbReference>
<dbReference type="PRINTS" id="PR00141">
    <property type="entry name" value="PROTEASOME"/>
</dbReference>
<dbReference type="SUPFAM" id="SSF56235">
    <property type="entry name" value="N-terminal nucleophile aminohydrolases (Ntn hydrolases)"/>
    <property type="match status" value="1"/>
</dbReference>
<dbReference type="PROSITE" id="PS00854">
    <property type="entry name" value="PROTEASOME_BETA_1"/>
    <property type="match status" value="1"/>
</dbReference>
<dbReference type="PROSITE" id="PS51476">
    <property type="entry name" value="PROTEASOME_BETA_2"/>
    <property type="match status" value="1"/>
</dbReference>
<organism>
    <name type="scientific">Methanocella paludicola (strain DSM 17711 / JCM 13418 / NBRC 101707 / SANAE)</name>
    <dbReference type="NCBI Taxonomy" id="304371"/>
    <lineage>
        <taxon>Archaea</taxon>
        <taxon>Methanobacteriati</taxon>
        <taxon>Methanobacteriota</taxon>
        <taxon>Stenosarchaea group</taxon>
        <taxon>Methanomicrobia</taxon>
        <taxon>Methanocellales</taxon>
        <taxon>Methanocellaceae</taxon>
        <taxon>Methanocella</taxon>
    </lineage>
</organism>
<evidence type="ECO:0000255" key="1">
    <source>
        <dbReference type="HAMAP-Rule" id="MF_02113"/>
    </source>
</evidence>
<comment type="function">
    <text evidence="1">Component of the proteasome core, a large protease complex with broad specificity involved in protein degradation.</text>
</comment>
<comment type="catalytic activity">
    <reaction evidence="1">
        <text>Cleavage of peptide bonds with very broad specificity.</text>
        <dbReference type="EC" id="3.4.25.1"/>
    </reaction>
</comment>
<comment type="activity regulation">
    <text evidence="1">The formation of the proteasomal ATPase PAN-20S proteasome complex, via the docking of the C-termini of PAN into the intersubunit pockets in the alpha-rings, triggers opening of the gate for substrate entry. Interconversion between the open-gate and close-gate conformations leads to a dynamic regulation of the 20S proteasome proteolysis activity.</text>
</comment>
<comment type="subunit">
    <text evidence="1">The 20S proteasome core is composed of 14 alpha and 14 beta subunits that assemble into four stacked heptameric rings, resulting in a barrel-shaped structure. The two inner rings, each composed of seven catalytic beta subunits, are sandwiched by two outer rings, each composed of seven alpha subunits. The catalytic chamber with the active sites is on the inside of the barrel. Has a gated structure, the ends of the cylinder being occluded by the N-termini of the alpha-subunits. Is capped at one or both ends by the proteasome regulatory ATPase, PAN.</text>
</comment>
<comment type="subcellular location">
    <subcellularLocation>
        <location evidence="1">Cytoplasm</location>
    </subcellularLocation>
</comment>
<comment type="similarity">
    <text evidence="1">Belongs to the peptidase T1B family.</text>
</comment>